<evidence type="ECO:0000255" key="1">
    <source>
        <dbReference type="HAMAP-Rule" id="MF_00301"/>
    </source>
</evidence>
<proteinExistence type="inferred from homology"/>
<sequence>MAVYTDINEIELGAFLRHYDIGTLTSYKGIAEGVENSNYLLHTSSGSFILTLYEKRTNREDLPFFLGLMQHLAKRGLECPQPVVRNDGAMIGQLAGRPAAIVTFLEGMWMRRPTVAHCEAVGEGLAHMHLAGADFPMRRRNGLTLPDWRPLWNLSRKCADTVERGLVAETEADLDFLEKNWPADLPQGVIHADLFPDNAFFLGDRLSGFIDFYFACTDILAYDVAVCLNAWCFEKDFSYNRTKGAALLRGYTSVRPLSEAEANALLVLARGAAVRFMLTRLYDWLTVPAGSFVVKKDPMEYVRRMRFHRQIESGAEYGLEMQGVAA</sequence>
<dbReference type="EC" id="2.7.1.39" evidence="1"/>
<dbReference type="EMBL" id="AE008917">
    <property type="protein sequence ID" value="AAL52639.1"/>
    <property type="molecule type" value="Genomic_DNA"/>
</dbReference>
<dbReference type="PIR" id="AD3434">
    <property type="entry name" value="AD3434"/>
</dbReference>
<dbReference type="RefSeq" id="WP_004683140.1">
    <property type="nucleotide sequence ID" value="NC_003317.1"/>
</dbReference>
<dbReference type="SMR" id="Q8YFR2"/>
<dbReference type="GeneID" id="29594311"/>
<dbReference type="KEGG" id="bme:BMEI1458"/>
<dbReference type="KEGG" id="bmel:DK63_2029"/>
<dbReference type="PATRIC" id="fig|224914.52.peg.2131"/>
<dbReference type="eggNOG" id="COG2334">
    <property type="taxonomic scope" value="Bacteria"/>
</dbReference>
<dbReference type="PhylomeDB" id="Q8YFR2"/>
<dbReference type="UniPathway" id="UPA00050">
    <property type="reaction ID" value="UER00064"/>
</dbReference>
<dbReference type="Proteomes" id="UP000000419">
    <property type="component" value="Chromosome I"/>
</dbReference>
<dbReference type="GO" id="GO:0005524">
    <property type="term" value="F:ATP binding"/>
    <property type="evidence" value="ECO:0007669"/>
    <property type="project" value="UniProtKB-KW"/>
</dbReference>
<dbReference type="GO" id="GO:0004413">
    <property type="term" value="F:homoserine kinase activity"/>
    <property type="evidence" value="ECO:0007669"/>
    <property type="project" value="UniProtKB-UniRule"/>
</dbReference>
<dbReference type="GO" id="GO:0009088">
    <property type="term" value="P:threonine biosynthetic process"/>
    <property type="evidence" value="ECO:0007669"/>
    <property type="project" value="UniProtKB-UniRule"/>
</dbReference>
<dbReference type="CDD" id="cd05153">
    <property type="entry name" value="HomoserineK_II"/>
    <property type="match status" value="1"/>
</dbReference>
<dbReference type="Gene3D" id="3.90.1200.10">
    <property type="match status" value="1"/>
</dbReference>
<dbReference type="Gene3D" id="3.30.200.20">
    <property type="entry name" value="Phosphorylase Kinase, domain 1"/>
    <property type="match status" value="1"/>
</dbReference>
<dbReference type="HAMAP" id="MF_00301">
    <property type="entry name" value="Homoser_kinase_2"/>
    <property type="match status" value="1"/>
</dbReference>
<dbReference type="InterPro" id="IPR002575">
    <property type="entry name" value="Aminoglycoside_PTrfase"/>
</dbReference>
<dbReference type="InterPro" id="IPR005280">
    <property type="entry name" value="Homoserine_kinase_II"/>
</dbReference>
<dbReference type="InterPro" id="IPR011009">
    <property type="entry name" value="Kinase-like_dom_sf"/>
</dbReference>
<dbReference type="InterPro" id="IPR050249">
    <property type="entry name" value="Pseudomonas-type_ThrB"/>
</dbReference>
<dbReference type="NCBIfam" id="NF003558">
    <property type="entry name" value="PRK05231.1"/>
    <property type="match status" value="1"/>
</dbReference>
<dbReference type="NCBIfam" id="TIGR00938">
    <property type="entry name" value="thrB_alt"/>
    <property type="match status" value="1"/>
</dbReference>
<dbReference type="PANTHER" id="PTHR21064:SF6">
    <property type="entry name" value="AMINOGLYCOSIDE PHOSPHOTRANSFERASE DOMAIN-CONTAINING PROTEIN"/>
    <property type="match status" value="1"/>
</dbReference>
<dbReference type="PANTHER" id="PTHR21064">
    <property type="entry name" value="AMINOGLYCOSIDE PHOSPHOTRANSFERASE DOMAIN-CONTAINING PROTEIN-RELATED"/>
    <property type="match status" value="1"/>
</dbReference>
<dbReference type="Pfam" id="PF01636">
    <property type="entry name" value="APH"/>
    <property type="match status" value="1"/>
</dbReference>
<dbReference type="SUPFAM" id="SSF56112">
    <property type="entry name" value="Protein kinase-like (PK-like)"/>
    <property type="match status" value="1"/>
</dbReference>
<comment type="catalytic activity">
    <reaction evidence="1">
        <text>L-homoserine + ATP = O-phospho-L-homoserine + ADP + H(+)</text>
        <dbReference type="Rhea" id="RHEA:13985"/>
        <dbReference type="ChEBI" id="CHEBI:15378"/>
        <dbReference type="ChEBI" id="CHEBI:30616"/>
        <dbReference type="ChEBI" id="CHEBI:57476"/>
        <dbReference type="ChEBI" id="CHEBI:57590"/>
        <dbReference type="ChEBI" id="CHEBI:456216"/>
        <dbReference type="EC" id="2.7.1.39"/>
    </reaction>
</comment>
<comment type="pathway">
    <text evidence="1">Amino-acid biosynthesis; L-threonine biosynthesis; L-threonine from L-aspartate: step 4/5.</text>
</comment>
<comment type="similarity">
    <text evidence="1">Belongs to the pseudomonas-type ThrB family.</text>
</comment>
<feature type="chain" id="PRO_0000172186" description="Homoserine kinase">
    <location>
        <begin position="1"/>
        <end position="326"/>
    </location>
</feature>
<accession>Q8YFR2</accession>
<keyword id="KW-0028">Amino-acid biosynthesis</keyword>
<keyword id="KW-0067">ATP-binding</keyword>
<keyword id="KW-0418">Kinase</keyword>
<keyword id="KW-0547">Nucleotide-binding</keyword>
<keyword id="KW-0791">Threonine biosynthesis</keyword>
<keyword id="KW-0808">Transferase</keyword>
<gene>
    <name evidence="1" type="primary">thrB</name>
    <name type="ordered locus">BMEI1458</name>
</gene>
<protein>
    <recommendedName>
        <fullName evidence="1">Homoserine kinase</fullName>
        <shortName evidence="1">HK</shortName>
        <shortName evidence="1">HSK</shortName>
        <ecNumber evidence="1">2.7.1.39</ecNumber>
    </recommendedName>
</protein>
<name>KHSE_BRUME</name>
<organism>
    <name type="scientific">Brucella melitensis biotype 1 (strain ATCC 23456 / CCUG 17765 / NCTC 10094 / 16M)</name>
    <dbReference type="NCBI Taxonomy" id="224914"/>
    <lineage>
        <taxon>Bacteria</taxon>
        <taxon>Pseudomonadati</taxon>
        <taxon>Pseudomonadota</taxon>
        <taxon>Alphaproteobacteria</taxon>
        <taxon>Hyphomicrobiales</taxon>
        <taxon>Brucellaceae</taxon>
        <taxon>Brucella/Ochrobactrum group</taxon>
        <taxon>Brucella</taxon>
    </lineage>
</organism>
<reference key="1">
    <citation type="journal article" date="2002" name="Proc. Natl. Acad. Sci. U.S.A.">
        <title>The genome sequence of the facultative intracellular pathogen Brucella melitensis.</title>
        <authorList>
            <person name="DelVecchio V.G."/>
            <person name="Kapatral V."/>
            <person name="Redkar R.J."/>
            <person name="Patra G."/>
            <person name="Mujer C."/>
            <person name="Los T."/>
            <person name="Ivanova N."/>
            <person name="Anderson I."/>
            <person name="Bhattacharyya A."/>
            <person name="Lykidis A."/>
            <person name="Reznik G."/>
            <person name="Jablonski L."/>
            <person name="Larsen N."/>
            <person name="D'Souza M."/>
            <person name="Bernal A."/>
            <person name="Mazur M."/>
            <person name="Goltsman E."/>
            <person name="Selkov E."/>
            <person name="Elzer P.H."/>
            <person name="Hagius S."/>
            <person name="O'Callaghan D."/>
            <person name="Letesson J.-J."/>
            <person name="Haselkorn R."/>
            <person name="Kyrpides N.C."/>
            <person name="Overbeek R."/>
        </authorList>
    </citation>
    <scope>NUCLEOTIDE SEQUENCE [LARGE SCALE GENOMIC DNA]</scope>
    <source>
        <strain>ATCC 23456 / CCUG 17765 / NCTC 10094 / 16M</strain>
    </source>
</reference>